<proteinExistence type="evidence at transcript level"/>
<sequence length="278" mass="31595">MWSNMDDKKVKEEKILHNSTNKKIIRHEDFVAGISKGMAILDSFGTDRHRLNITMAAEKTGMTRAAARRHLLTLEYLGYLESDGHYFYLTPKILKFSGSYLGGAQLPKISQPLLNLLTTQTSLIYSVMVLDGYEAITIARSAAHQQTDRVNPYGLHLGNRLPAHATSAGKILLAYLDDHAQQEWLNQYPLQRLTKYTYTNNIDFLRLLSEIKEQGWCYSSEEHELGVHALAVPIYGQQSRVVAALNIVSPTMRTTKEYLIQHILPLLQETARELRNIL</sequence>
<evidence type="ECO:0000255" key="1">
    <source>
        <dbReference type="PROSITE-ProRule" id="PRU00393"/>
    </source>
</evidence>
<evidence type="ECO:0000255" key="2">
    <source>
        <dbReference type="PROSITE-ProRule" id="PRU00394"/>
    </source>
</evidence>
<evidence type="ECO:0000305" key="3"/>
<dbReference type="EMBL" id="L05770">
    <property type="protein sequence ID" value="AAC37157.1"/>
    <property type="molecule type" value="Genomic_DNA"/>
</dbReference>
<dbReference type="EMBL" id="CR543861">
    <property type="protein sequence ID" value="CAG68545.1"/>
    <property type="molecule type" value="Genomic_DNA"/>
</dbReference>
<dbReference type="SMR" id="O83046"/>
<dbReference type="STRING" id="202950.GCA_001485005_03277"/>
<dbReference type="KEGG" id="aci:ACIAD1702"/>
<dbReference type="eggNOG" id="COG1414">
    <property type="taxonomic scope" value="Bacteria"/>
</dbReference>
<dbReference type="HOGENOM" id="CLU_062618_0_1_6"/>
<dbReference type="Proteomes" id="UP000000430">
    <property type="component" value="Chromosome"/>
</dbReference>
<dbReference type="GO" id="GO:0003677">
    <property type="term" value="F:DNA binding"/>
    <property type="evidence" value="ECO:0007669"/>
    <property type="project" value="UniProtKB-KW"/>
</dbReference>
<dbReference type="GO" id="GO:0003700">
    <property type="term" value="F:DNA-binding transcription factor activity"/>
    <property type="evidence" value="ECO:0007669"/>
    <property type="project" value="TreeGrafter"/>
</dbReference>
<dbReference type="GO" id="GO:0046278">
    <property type="term" value="P:3,4-dihydroxybenzoate metabolic process"/>
    <property type="evidence" value="ECO:0007669"/>
    <property type="project" value="InterPro"/>
</dbReference>
<dbReference type="GO" id="GO:0009056">
    <property type="term" value="P:catabolic process"/>
    <property type="evidence" value="ECO:0007669"/>
    <property type="project" value="UniProtKB-KW"/>
</dbReference>
<dbReference type="GO" id="GO:0045892">
    <property type="term" value="P:negative regulation of DNA-templated transcription"/>
    <property type="evidence" value="ECO:0007669"/>
    <property type="project" value="TreeGrafter"/>
</dbReference>
<dbReference type="GO" id="GO:0045893">
    <property type="term" value="P:positive regulation of DNA-templated transcription"/>
    <property type="evidence" value="ECO:0007669"/>
    <property type="project" value="InterPro"/>
</dbReference>
<dbReference type="Gene3D" id="3.30.450.40">
    <property type="match status" value="1"/>
</dbReference>
<dbReference type="Gene3D" id="1.10.10.10">
    <property type="entry name" value="Winged helix-like DNA-binding domain superfamily/Winged helix DNA-binding domain"/>
    <property type="match status" value="1"/>
</dbReference>
<dbReference type="InterPro" id="IPR029016">
    <property type="entry name" value="GAF-like_dom_sf"/>
</dbReference>
<dbReference type="InterPro" id="IPR050707">
    <property type="entry name" value="HTH_MetabolicPath_Reg"/>
</dbReference>
<dbReference type="InterPro" id="IPR012794">
    <property type="entry name" value="PcaR_PcaU"/>
</dbReference>
<dbReference type="InterPro" id="IPR014757">
    <property type="entry name" value="Tscrpt_reg_IclR_C"/>
</dbReference>
<dbReference type="InterPro" id="IPR005471">
    <property type="entry name" value="Tscrpt_reg_IclR_N"/>
</dbReference>
<dbReference type="InterPro" id="IPR036388">
    <property type="entry name" value="WH-like_DNA-bd_sf"/>
</dbReference>
<dbReference type="InterPro" id="IPR036390">
    <property type="entry name" value="WH_DNA-bd_sf"/>
</dbReference>
<dbReference type="NCBIfam" id="TIGR02431">
    <property type="entry name" value="pcaR_pcaU"/>
    <property type="match status" value="1"/>
</dbReference>
<dbReference type="PANTHER" id="PTHR30136">
    <property type="entry name" value="HELIX-TURN-HELIX TRANSCRIPTIONAL REGULATOR, ICLR FAMILY"/>
    <property type="match status" value="1"/>
</dbReference>
<dbReference type="PANTHER" id="PTHR30136:SF34">
    <property type="entry name" value="TRANSCRIPTIONAL REGULATOR"/>
    <property type="match status" value="1"/>
</dbReference>
<dbReference type="Pfam" id="PF09339">
    <property type="entry name" value="HTH_IclR"/>
    <property type="match status" value="1"/>
</dbReference>
<dbReference type="Pfam" id="PF01614">
    <property type="entry name" value="IclR_C"/>
    <property type="match status" value="1"/>
</dbReference>
<dbReference type="SMART" id="SM00346">
    <property type="entry name" value="HTH_ICLR"/>
    <property type="match status" value="1"/>
</dbReference>
<dbReference type="SUPFAM" id="SSF55781">
    <property type="entry name" value="GAF domain-like"/>
    <property type="match status" value="1"/>
</dbReference>
<dbReference type="SUPFAM" id="SSF46785">
    <property type="entry name" value="Winged helix' DNA-binding domain"/>
    <property type="match status" value="1"/>
</dbReference>
<dbReference type="PROSITE" id="PS51077">
    <property type="entry name" value="HTH_ICLR"/>
    <property type="match status" value="1"/>
</dbReference>
<dbReference type="PROSITE" id="PS51078">
    <property type="entry name" value="ICLR_ED"/>
    <property type="match status" value="1"/>
</dbReference>
<comment type="function">
    <text>Activates transcription of the pca operon.</text>
</comment>
<comment type="induction">
    <text>By protocatechuate.</text>
</comment>
<comment type="caution">
    <text evidence="3">It is uncertain whether Met-1 or Met-5 is the initiator.</text>
</comment>
<keyword id="KW-0010">Activator</keyword>
<keyword id="KW-0058">Aromatic hydrocarbons catabolism</keyword>
<keyword id="KW-0238">DNA-binding</keyword>
<keyword id="KW-0804">Transcription</keyword>
<keyword id="KW-0805">Transcription regulation</keyword>
<name>PCAU_ACIAD</name>
<feature type="chain" id="PRO_0000201765" description="Pca operon regulatory protein">
    <location>
        <begin position="1"/>
        <end position="278"/>
    </location>
</feature>
<feature type="domain" description="HTH iclR-type" evidence="1">
    <location>
        <begin position="31"/>
        <end position="91"/>
    </location>
</feature>
<feature type="domain" description="IclR-ED" evidence="2">
    <location>
        <begin position="106"/>
        <end position="278"/>
    </location>
</feature>
<feature type="DNA-binding region" description="H-T-H motif" evidence="1">
    <location>
        <begin position="53"/>
        <end position="72"/>
    </location>
</feature>
<accession>O83046</accession>
<accession>Q43939</accession>
<protein>
    <recommendedName>
        <fullName>Pca operon regulatory protein</fullName>
    </recommendedName>
</protein>
<gene>
    <name type="primary">pcaU</name>
    <name type="ordered locus">ACIAD1702</name>
</gene>
<organism>
    <name type="scientific">Acinetobacter baylyi (strain ATCC 33305 / BD413 / ADP1)</name>
    <dbReference type="NCBI Taxonomy" id="62977"/>
    <lineage>
        <taxon>Bacteria</taxon>
        <taxon>Pseudomonadati</taxon>
        <taxon>Pseudomonadota</taxon>
        <taxon>Gammaproteobacteria</taxon>
        <taxon>Moraxellales</taxon>
        <taxon>Moraxellaceae</taxon>
        <taxon>Acinetobacter</taxon>
    </lineage>
</organism>
<reference key="1">
    <citation type="journal article" date="1998" name="J. Bacteriol.">
        <title>PcaU, a transcriptional activator of genes for protocatechuate utilization in Acinetobacter.</title>
        <authorList>
            <person name="Gerischer U."/>
            <person name="Segura A."/>
            <person name="Ornston L.N."/>
        </authorList>
    </citation>
    <scope>NUCLEOTIDE SEQUENCE [GENOMIC DNA]</scope>
</reference>
<reference key="2">
    <citation type="journal article" date="2004" name="Nucleic Acids Res.">
        <title>Unique features revealed by the genome sequence of Acinetobacter sp. ADP1, a versatile and naturally transformation competent bacterium.</title>
        <authorList>
            <person name="Barbe V."/>
            <person name="Vallenet D."/>
            <person name="Fonknechten N."/>
            <person name="Kreimeyer A."/>
            <person name="Oztas S."/>
            <person name="Labarre L."/>
            <person name="Cruveiller S."/>
            <person name="Robert C."/>
            <person name="Duprat S."/>
            <person name="Wincker P."/>
            <person name="Ornston L.N."/>
            <person name="Weissenbach J."/>
            <person name="Marliere P."/>
            <person name="Cohen G.N."/>
            <person name="Medigue C."/>
        </authorList>
    </citation>
    <scope>NUCLEOTIDE SEQUENCE [LARGE SCALE GENOMIC DNA]</scope>
    <source>
        <strain>ATCC 33305 / BD413 / ADP1</strain>
    </source>
</reference>